<protein>
    <recommendedName>
        <fullName evidence="1">Adenosylcobinamide-GDP ribazoletransferase</fullName>
        <ecNumber evidence="1">2.7.8.26</ecNumber>
    </recommendedName>
    <alternativeName>
        <fullName evidence="1">Cobalamin synthase</fullName>
    </alternativeName>
    <alternativeName>
        <fullName evidence="1">Cobalamin-5'-phosphate synthase</fullName>
    </alternativeName>
</protein>
<proteinExistence type="inferred from homology"/>
<name>COBS_ECO8A</name>
<dbReference type="EC" id="2.7.8.26" evidence="1"/>
<dbReference type="EMBL" id="CU928160">
    <property type="protein sequence ID" value="CAQ98921.1"/>
    <property type="molecule type" value="Genomic_DNA"/>
</dbReference>
<dbReference type="RefSeq" id="WP_001297350.1">
    <property type="nucleotide sequence ID" value="NC_011741.1"/>
</dbReference>
<dbReference type="GeneID" id="93775192"/>
<dbReference type="KEGG" id="ecr:ECIAI1_2073"/>
<dbReference type="HOGENOM" id="CLU_057426_1_1_6"/>
<dbReference type="UniPathway" id="UPA00148">
    <property type="reaction ID" value="UER00238"/>
</dbReference>
<dbReference type="GO" id="GO:0005886">
    <property type="term" value="C:plasma membrane"/>
    <property type="evidence" value="ECO:0007669"/>
    <property type="project" value="UniProtKB-SubCell"/>
</dbReference>
<dbReference type="GO" id="GO:0051073">
    <property type="term" value="F:adenosylcobinamide-GDP ribazoletransferase activity"/>
    <property type="evidence" value="ECO:0007669"/>
    <property type="project" value="UniProtKB-UniRule"/>
</dbReference>
<dbReference type="GO" id="GO:0008818">
    <property type="term" value="F:cobalamin 5'-phosphate synthase activity"/>
    <property type="evidence" value="ECO:0007669"/>
    <property type="project" value="UniProtKB-UniRule"/>
</dbReference>
<dbReference type="GO" id="GO:0009236">
    <property type="term" value="P:cobalamin biosynthetic process"/>
    <property type="evidence" value="ECO:0007669"/>
    <property type="project" value="UniProtKB-UniRule"/>
</dbReference>
<dbReference type="HAMAP" id="MF_00719">
    <property type="entry name" value="CobS"/>
    <property type="match status" value="1"/>
</dbReference>
<dbReference type="InterPro" id="IPR003805">
    <property type="entry name" value="CobS"/>
</dbReference>
<dbReference type="NCBIfam" id="TIGR00317">
    <property type="entry name" value="cobS"/>
    <property type="match status" value="1"/>
</dbReference>
<dbReference type="PANTHER" id="PTHR34148">
    <property type="entry name" value="ADENOSYLCOBINAMIDE-GDP RIBAZOLETRANSFERASE"/>
    <property type="match status" value="1"/>
</dbReference>
<dbReference type="PANTHER" id="PTHR34148:SF1">
    <property type="entry name" value="ADENOSYLCOBINAMIDE-GDP RIBAZOLETRANSFERASE"/>
    <property type="match status" value="1"/>
</dbReference>
<dbReference type="Pfam" id="PF02654">
    <property type="entry name" value="CobS"/>
    <property type="match status" value="1"/>
</dbReference>
<sequence length="247" mass="26396">MSKLFWAMLSFITRLPVPRRWSQGLDFEHYSRGIITFPLIGLLLGAISGLVFMVLQAWCGVPLAALFSVLVLALMTGGFHLDGLADTCDGVFSARSRDRMLEIMRDSRLGTHGGLALIFVVLAKILVLSELALRGEPILASLAAACAVSRGTAALLMYRHRYAREEGLGNVFIGKIDGRQTCVTLGLAAIFAAVLLPGMHGVAAMVVTMVAIFILGQLLKRTLGGQTGDTLGAAIELGELVFLLALL</sequence>
<evidence type="ECO:0000255" key="1">
    <source>
        <dbReference type="HAMAP-Rule" id="MF_00719"/>
    </source>
</evidence>
<organism>
    <name type="scientific">Escherichia coli O8 (strain IAI1)</name>
    <dbReference type="NCBI Taxonomy" id="585034"/>
    <lineage>
        <taxon>Bacteria</taxon>
        <taxon>Pseudomonadati</taxon>
        <taxon>Pseudomonadota</taxon>
        <taxon>Gammaproteobacteria</taxon>
        <taxon>Enterobacterales</taxon>
        <taxon>Enterobacteriaceae</taxon>
        <taxon>Escherichia</taxon>
    </lineage>
</organism>
<keyword id="KW-0997">Cell inner membrane</keyword>
<keyword id="KW-1003">Cell membrane</keyword>
<keyword id="KW-0169">Cobalamin biosynthesis</keyword>
<keyword id="KW-0460">Magnesium</keyword>
<keyword id="KW-0472">Membrane</keyword>
<keyword id="KW-0808">Transferase</keyword>
<keyword id="KW-0812">Transmembrane</keyword>
<keyword id="KW-1133">Transmembrane helix</keyword>
<comment type="function">
    <text evidence="1">Joins adenosylcobinamide-GDP and alpha-ribazole to generate adenosylcobalamin (Ado-cobalamin). Also synthesizes adenosylcobalamin 5'-phosphate from adenosylcobinamide-GDP and alpha-ribazole 5'-phosphate.</text>
</comment>
<comment type="catalytic activity">
    <reaction evidence="1">
        <text>alpha-ribazole + adenosylcob(III)inamide-GDP = adenosylcob(III)alamin + GMP + H(+)</text>
        <dbReference type="Rhea" id="RHEA:16049"/>
        <dbReference type="ChEBI" id="CHEBI:10329"/>
        <dbReference type="ChEBI" id="CHEBI:15378"/>
        <dbReference type="ChEBI" id="CHEBI:18408"/>
        <dbReference type="ChEBI" id="CHEBI:58115"/>
        <dbReference type="ChEBI" id="CHEBI:60487"/>
        <dbReference type="EC" id="2.7.8.26"/>
    </reaction>
</comment>
<comment type="catalytic activity">
    <reaction evidence="1">
        <text>alpha-ribazole 5'-phosphate + adenosylcob(III)inamide-GDP = adenosylcob(III)alamin 5'-phosphate + GMP + H(+)</text>
        <dbReference type="Rhea" id="RHEA:23560"/>
        <dbReference type="ChEBI" id="CHEBI:15378"/>
        <dbReference type="ChEBI" id="CHEBI:57918"/>
        <dbReference type="ChEBI" id="CHEBI:58115"/>
        <dbReference type="ChEBI" id="CHEBI:60487"/>
        <dbReference type="ChEBI" id="CHEBI:60493"/>
        <dbReference type="EC" id="2.7.8.26"/>
    </reaction>
</comment>
<comment type="cofactor">
    <cofactor evidence="1">
        <name>Mg(2+)</name>
        <dbReference type="ChEBI" id="CHEBI:18420"/>
    </cofactor>
</comment>
<comment type="pathway">
    <text evidence="1">Cofactor biosynthesis; adenosylcobalamin biosynthesis; adenosylcobalamin from cob(II)yrinate a,c-diamide: step 7/7.</text>
</comment>
<comment type="subcellular location">
    <subcellularLocation>
        <location evidence="1">Cell inner membrane</location>
        <topology evidence="1">Multi-pass membrane protein</topology>
    </subcellularLocation>
</comment>
<comment type="similarity">
    <text evidence="1">Belongs to the CobS family.</text>
</comment>
<reference key="1">
    <citation type="journal article" date="2009" name="PLoS Genet.">
        <title>Organised genome dynamics in the Escherichia coli species results in highly diverse adaptive paths.</title>
        <authorList>
            <person name="Touchon M."/>
            <person name="Hoede C."/>
            <person name="Tenaillon O."/>
            <person name="Barbe V."/>
            <person name="Baeriswyl S."/>
            <person name="Bidet P."/>
            <person name="Bingen E."/>
            <person name="Bonacorsi S."/>
            <person name="Bouchier C."/>
            <person name="Bouvet O."/>
            <person name="Calteau A."/>
            <person name="Chiapello H."/>
            <person name="Clermont O."/>
            <person name="Cruveiller S."/>
            <person name="Danchin A."/>
            <person name="Diard M."/>
            <person name="Dossat C."/>
            <person name="Karoui M.E."/>
            <person name="Frapy E."/>
            <person name="Garry L."/>
            <person name="Ghigo J.M."/>
            <person name="Gilles A.M."/>
            <person name="Johnson J."/>
            <person name="Le Bouguenec C."/>
            <person name="Lescat M."/>
            <person name="Mangenot S."/>
            <person name="Martinez-Jehanne V."/>
            <person name="Matic I."/>
            <person name="Nassif X."/>
            <person name="Oztas S."/>
            <person name="Petit M.A."/>
            <person name="Pichon C."/>
            <person name="Rouy Z."/>
            <person name="Ruf C.S."/>
            <person name="Schneider D."/>
            <person name="Tourret J."/>
            <person name="Vacherie B."/>
            <person name="Vallenet D."/>
            <person name="Medigue C."/>
            <person name="Rocha E.P.C."/>
            <person name="Denamur E."/>
        </authorList>
    </citation>
    <scope>NUCLEOTIDE SEQUENCE [LARGE SCALE GENOMIC DNA]</scope>
    <source>
        <strain>IAI1</strain>
    </source>
</reference>
<feature type="chain" id="PRO_1000132577" description="Adenosylcobinamide-GDP ribazoletransferase">
    <location>
        <begin position="1"/>
        <end position="247"/>
    </location>
</feature>
<feature type="transmembrane region" description="Helical" evidence="1">
    <location>
        <begin position="34"/>
        <end position="54"/>
    </location>
</feature>
<feature type="transmembrane region" description="Helical" evidence="1">
    <location>
        <begin position="59"/>
        <end position="79"/>
    </location>
</feature>
<feature type="transmembrane region" description="Helical" evidence="1">
    <location>
        <begin position="113"/>
        <end position="133"/>
    </location>
</feature>
<feature type="transmembrane region" description="Helical" evidence="1">
    <location>
        <begin position="138"/>
        <end position="158"/>
    </location>
</feature>
<feature type="transmembrane region" description="Helical" evidence="1">
    <location>
        <begin position="194"/>
        <end position="214"/>
    </location>
</feature>
<gene>
    <name evidence="1" type="primary">cobS</name>
    <name type="ordered locus">ECIAI1_2073</name>
</gene>
<accession>B7M3C8</accession>